<gene>
    <name type="primary">PROC</name>
</gene>
<evidence type="ECO:0000250" key="1"/>
<evidence type="ECO:0000250" key="2">
    <source>
        <dbReference type="UniProtKB" id="P00745"/>
    </source>
</evidence>
<evidence type="ECO:0000250" key="3">
    <source>
        <dbReference type="UniProtKB" id="P04070"/>
    </source>
</evidence>
<evidence type="ECO:0000255" key="4"/>
<evidence type="ECO:0000255" key="5">
    <source>
        <dbReference type="PROSITE-ProRule" id="PRU00076"/>
    </source>
</evidence>
<evidence type="ECO:0000255" key="6">
    <source>
        <dbReference type="PROSITE-ProRule" id="PRU00274"/>
    </source>
</evidence>
<evidence type="ECO:0000255" key="7">
    <source>
        <dbReference type="PROSITE-ProRule" id="PRU00463"/>
    </source>
</evidence>
<accession>Q28661</accession>
<keyword id="KW-0094">Blood coagulation</keyword>
<keyword id="KW-0106">Calcium</keyword>
<keyword id="KW-0165">Cleavage on pair of basic residues</keyword>
<keyword id="KW-1015">Disulfide bond</keyword>
<keyword id="KW-0245">EGF-like domain</keyword>
<keyword id="KW-0256">Endoplasmic reticulum</keyword>
<keyword id="KW-0301">Gamma-carboxyglutamic acid</keyword>
<keyword id="KW-0325">Glycoprotein</keyword>
<keyword id="KW-0333">Golgi apparatus</keyword>
<keyword id="KW-0356">Hemostasis</keyword>
<keyword id="KW-0378">Hydrolase</keyword>
<keyword id="KW-0379">Hydroxylation</keyword>
<keyword id="KW-0645">Protease</keyword>
<keyword id="KW-1185">Reference proteome</keyword>
<keyword id="KW-0677">Repeat</keyword>
<keyword id="KW-0964">Secreted</keyword>
<keyword id="KW-0720">Serine protease</keyword>
<keyword id="KW-0732">Signal</keyword>
<keyword id="KW-0865">Zymogen</keyword>
<protein>
    <recommendedName>
        <fullName>Vitamin K-dependent protein C</fullName>
        <ecNumber>3.4.21.69</ecNumber>
    </recommendedName>
    <alternativeName>
        <fullName>Anticoagulant protein C</fullName>
    </alternativeName>
    <alternativeName>
        <fullName>Autoprothrombin IIA</fullName>
    </alternativeName>
    <alternativeName>
        <fullName>Blood coagulation factor XIV</fullName>
    </alternativeName>
    <component>
        <recommendedName>
            <fullName>Vitamin K-dependent protein C light chain</fullName>
        </recommendedName>
    </component>
    <component>
        <recommendedName>
            <fullName>Vitamin K-dependent protein C heavy chain</fullName>
        </recommendedName>
    </component>
    <component>
        <recommendedName>
            <fullName>Activation peptide</fullName>
        </recommendedName>
    </component>
</protein>
<name>PROC_RABIT</name>
<feature type="signal peptide" evidence="1">
    <location>
        <begin position="1" status="less than"/>
        <end position="27"/>
    </location>
</feature>
<feature type="propeptide" id="PRO_0000028122" evidence="1">
    <location>
        <begin position="28"/>
        <end position="36"/>
    </location>
</feature>
<feature type="chain" id="PRO_0000028123" description="Vitamin K-dependent protein C">
    <location>
        <begin position="37"/>
        <end position="458"/>
    </location>
</feature>
<feature type="chain" id="PRO_0000028124" description="Vitamin K-dependent protein C light chain" evidence="1">
    <location>
        <begin position="37"/>
        <end position="192"/>
    </location>
</feature>
<feature type="chain" id="PRO_0000028125" description="Vitamin K-dependent protein C heavy chain" evidence="1">
    <location>
        <begin position="195"/>
        <end position="458"/>
    </location>
</feature>
<feature type="peptide" id="PRO_0000028126" description="Activation peptide" evidence="1">
    <location>
        <begin position="195"/>
        <end position="209"/>
    </location>
</feature>
<feature type="domain" description="Gla" evidence="7">
    <location>
        <begin position="37"/>
        <end position="82"/>
    </location>
</feature>
<feature type="domain" description="EGF-like 1" evidence="5">
    <location>
        <begin position="91"/>
        <end position="126"/>
    </location>
</feature>
<feature type="domain" description="EGF-like 2" evidence="5">
    <location>
        <begin position="130"/>
        <end position="170"/>
    </location>
</feature>
<feature type="domain" description="Peptidase S1" evidence="6">
    <location>
        <begin position="210"/>
        <end position="447"/>
    </location>
</feature>
<feature type="active site" description="Charge relay system">
    <location>
        <position position="250"/>
    </location>
</feature>
<feature type="active site" description="Charge relay system">
    <location>
        <position position="296"/>
    </location>
</feature>
<feature type="active site" description="Charge relay system">
    <location>
        <position position="399"/>
    </location>
</feature>
<feature type="site" description="Cleavage; by thrombin" evidence="1">
    <location>
        <begin position="209"/>
        <end position="210"/>
    </location>
</feature>
<feature type="modified residue" description="4-carboxyglutamate" evidence="2 7">
    <location>
        <position position="42"/>
    </location>
</feature>
<feature type="modified residue" description="4-carboxyglutamate" evidence="2 7">
    <location>
        <position position="43"/>
    </location>
</feature>
<feature type="modified residue" description="4-carboxyglutamate" evidence="2 7">
    <location>
        <position position="50"/>
    </location>
</feature>
<feature type="modified residue" description="4-carboxyglutamate" evidence="2 7">
    <location>
        <position position="52"/>
    </location>
</feature>
<feature type="modified residue" description="4-carboxyglutamate" evidence="2 7">
    <location>
        <position position="55"/>
    </location>
</feature>
<feature type="modified residue" description="4-carboxyglutamate" evidence="2 7">
    <location>
        <position position="56"/>
    </location>
</feature>
<feature type="modified residue" description="4-carboxyglutamate" evidence="2 7">
    <location>
        <position position="61"/>
    </location>
</feature>
<feature type="modified residue" description="4-carboxyglutamate" evidence="2 7">
    <location>
        <position position="62"/>
    </location>
</feature>
<feature type="modified residue" description="4-carboxyglutamate" evidence="2 7">
    <location>
        <position position="65"/>
    </location>
</feature>
<feature type="modified residue" description="(3R)-3-hydroxyaspartate" evidence="1">
    <location>
        <position position="107"/>
    </location>
</feature>
<feature type="glycosylation site" description="N-linked (GlcNAc...) asparagine" evidence="4">
    <location>
        <position position="133"/>
    </location>
</feature>
<feature type="glycosylation site" description="N-linked (GlcNAc...) asparagine" evidence="4">
    <location>
        <position position="287"/>
    </location>
</feature>
<feature type="glycosylation site" description="N-linked (GlcNAc...) asparagine" evidence="4">
    <location>
        <position position="352"/>
    </location>
</feature>
<feature type="disulfide bond" evidence="1">
    <location>
        <begin position="53"/>
        <end position="58"/>
    </location>
</feature>
<feature type="disulfide bond" evidence="1">
    <location>
        <begin position="86"/>
        <end position="105"/>
    </location>
</feature>
<feature type="disulfide bond" evidence="1">
    <location>
        <begin position="95"/>
        <end position="100"/>
    </location>
</feature>
<feature type="disulfide bond" evidence="1">
    <location>
        <begin position="99"/>
        <end position="114"/>
    </location>
</feature>
<feature type="disulfide bond" evidence="1">
    <location>
        <begin position="116"/>
        <end position="125"/>
    </location>
</feature>
<feature type="disulfide bond" evidence="1">
    <location>
        <begin position="134"/>
        <end position="145"/>
    </location>
</feature>
<feature type="disulfide bond" evidence="1">
    <location>
        <begin position="141"/>
        <end position="154"/>
    </location>
</feature>
<feature type="disulfide bond" evidence="1">
    <location>
        <begin position="156"/>
        <end position="169"/>
    </location>
</feature>
<feature type="disulfide bond" description="Interchain (between light and heavy chains)" evidence="5 6 7">
    <location>
        <begin position="177"/>
        <end position="316"/>
    </location>
</feature>
<feature type="disulfide bond" evidence="1">
    <location>
        <begin position="235"/>
        <end position="251"/>
    </location>
</feature>
<feature type="disulfide bond" evidence="1">
    <location>
        <begin position="370"/>
        <end position="384"/>
    </location>
</feature>
<feature type="disulfide bond" evidence="1">
    <location>
        <begin position="395"/>
        <end position="423"/>
    </location>
</feature>
<feature type="non-terminal residue">
    <location>
        <position position="1"/>
    </location>
</feature>
<proteinExistence type="evidence at transcript level"/>
<organism>
    <name type="scientific">Oryctolagus cuniculus</name>
    <name type="common">Rabbit</name>
    <dbReference type="NCBI Taxonomy" id="9986"/>
    <lineage>
        <taxon>Eukaryota</taxon>
        <taxon>Metazoa</taxon>
        <taxon>Chordata</taxon>
        <taxon>Craniata</taxon>
        <taxon>Vertebrata</taxon>
        <taxon>Euteleostomi</taxon>
        <taxon>Mammalia</taxon>
        <taxon>Eutheria</taxon>
        <taxon>Euarchontoglires</taxon>
        <taxon>Glires</taxon>
        <taxon>Lagomorpha</taxon>
        <taxon>Leporidae</taxon>
        <taxon>Oryctolagus</taxon>
    </lineage>
</organism>
<dbReference type="EC" id="3.4.21.69"/>
<dbReference type="EMBL" id="U49933">
    <property type="protein sequence ID" value="AAA92956.1"/>
    <property type="molecule type" value="mRNA"/>
</dbReference>
<dbReference type="SMR" id="Q28661"/>
<dbReference type="FunCoup" id="Q28661">
    <property type="interactions" value="21"/>
</dbReference>
<dbReference type="STRING" id="9986.ENSOCUP00000041616"/>
<dbReference type="MEROPS" id="S01.218"/>
<dbReference type="GlyCosmos" id="Q28661">
    <property type="glycosylation" value="3 sites, No reported glycans"/>
</dbReference>
<dbReference type="PaxDb" id="9986-ENSOCUP00000013608"/>
<dbReference type="eggNOG" id="ENOG502QQ3W">
    <property type="taxonomic scope" value="Eukaryota"/>
</dbReference>
<dbReference type="InParanoid" id="Q28661"/>
<dbReference type="Proteomes" id="UP000001811">
    <property type="component" value="Unplaced"/>
</dbReference>
<dbReference type="GO" id="GO:0005783">
    <property type="term" value="C:endoplasmic reticulum"/>
    <property type="evidence" value="ECO:0000250"/>
    <property type="project" value="UniProtKB"/>
</dbReference>
<dbReference type="GO" id="GO:0005615">
    <property type="term" value="C:extracellular space"/>
    <property type="evidence" value="ECO:0007669"/>
    <property type="project" value="TreeGrafter"/>
</dbReference>
<dbReference type="GO" id="GO:0005794">
    <property type="term" value="C:Golgi apparatus"/>
    <property type="evidence" value="ECO:0000250"/>
    <property type="project" value="UniProtKB"/>
</dbReference>
<dbReference type="GO" id="GO:0005509">
    <property type="term" value="F:calcium ion binding"/>
    <property type="evidence" value="ECO:0007669"/>
    <property type="project" value="InterPro"/>
</dbReference>
<dbReference type="GO" id="GO:0004252">
    <property type="term" value="F:serine-type endopeptidase activity"/>
    <property type="evidence" value="ECO:0000250"/>
    <property type="project" value="UniProtKB"/>
</dbReference>
<dbReference type="GO" id="GO:0007596">
    <property type="term" value="P:blood coagulation"/>
    <property type="evidence" value="ECO:0007669"/>
    <property type="project" value="UniProtKB-KW"/>
</dbReference>
<dbReference type="GO" id="GO:0043066">
    <property type="term" value="P:negative regulation of apoptotic process"/>
    <property type="evidence" value="ECO:0000250"/>
    <property type="project" value="UniProtKB"/>
</dbReference>
<dbReference type="GO" id="GO:0030195">
    <property type="term" value="P:negative regulation of blood coagulation"/>
    <property type="evidence" value="ECO:0007669"/>
    <property type="project" value="TreeGrafter"/>
</dbReference>
<dbReference type="GO" id="GO:0050819">
    <property type="term" value="P:negative regulation of coagulation"/>
    <property type="evidence" value="ECO:0000250"/>
    <property type="project" value="UniProtKB"/>
</dbReference>
<dbReference type="GO" id="GO:0050728">
    <property type="term" value="P:negative regulation of inflammatory response"/>
    <property type="evidence" value="ECO:0000250"/>
    <property type="project" value="UniProtKB"/>
</dbReference>
<dbReference type="GO" id="GO:1903142">
    <property type="term" value="P:positive regulation of establishment of endothelial barrier"/>
    <property type="evidence" value="ECO:0000250"/>
    <property type="project" value="UniProtKB"/>
</dbReference>
<dbReference type="GO" id="GO:0006508">
    <property type="term" value="P:proteolysis"/>
    <property type="evidence" value="ECO:0007669"/>
    <property type="project" value="UniProtKB-KW"/>
</dbReference>
<dbReference type="CDD" id="cd00054">
    <property type="entry name" value="EGF_CA"/>
    <property type="match status" value="1"/>
</dbReference>
<dbReference type="CDD" id="cd00190">
    <property type="entry name" value="Tryp_SPc"/>
    <property type="match status" value="1"/>
</dbReference>
<dbReference type="FunFam" id="2.40.10.10:FF:000365">
    <property type="match status" value="1"/>
</dbReference>
<dbReference type="FunFam" id="2.10.25.10:FF:000549">
    <property type="entry name" value="Vitamin K-dependent protein C"/>
    <property type="match status" value="1"/>
</dbReference>
<dbReference type="FunFam" id="2.10.25.10:FF:000567">
    <property type="entry name" value="Vitamin K-dependent protein C"/>
    <property type="match status" value="1"/>
</dbReference>
<dbReference type="FunFam" id="2.40.10.10:FF:000256">
    <property type="entry name" value="Vitamin K-dependent protein C"/>
    <property type="match status" value="1"/>
</dbReference>
<dbReference type="FunFam" id="4.10.740.10:FF:000001">
    <property type="entry name" value="vitamin K-dependent protein S"/>
    <property type="match status" value="1"/>
</dbReference>
<dbReference type="Gene3D" id="4.10.740.10">
    <property type="entry name" value="Coagulation Factor IX"/>
    <property type="match status" value="1"/>
</dbReference>
<dbReference type="Gene3D" id="2.10.25.10">
    <property type="entry name" value="Laminin"/>
    <property type="match status" value="2"/>
</dbReference>
<dbReference type="Gene3D" id="2.40.10.10">
    <property type="entry name" value="Trypsin-like serine proteases"/>
    <property type="match status" value="2"/>
</dbReference>
<dbReference type="InterPro" id="IPR017857">
    <property type="entry name" value="Coagulation_fac-like_Gla_dom"/>
</dbReference>
<dbReference type="InterPro" id="IPR001881">
    <property type="entry name" value="EGF-like_Ca-bd_dom"/>
</dbReference>
<dbReference type="InterPro" id="IPR000742">
    <property type="entry name" value="EGF-like_dom"/>
</dbReference>
<dbReference type="InterPro" id="IPR000152">
    <property type="entry name" value="EGF-type_Asp/Asn_hydroxyl_site"/>
</dbReference>
<dbReference type="InterPro" id="IPR018097">
    <property type="entry name" value="EGF_Ca-bd_CS"/>
</dbReference>
<dbReference type="InterPro" id="IPR035972">
    <property type="entry name" value="GLA-like_dom_SF"/>
</dbReference>
<dbReference type="InterPro" id="IPR000294">
    <property type="entry name" value="GLA_domain"/>
</dbReference>
<dbReference type="InterPro" id="IPR012224">
    <property type="entry name" value="Pept_S1A_FX"/>
</dbReference>
<dbReference type="InterPro" id="IPR050442">
    <property type="entry name" value="Peptidase_S1_coag_factors"/>
</dbReference>
<dbReference type="InterPro" id="IPR009003">
    <property type="entry name" value="Peptidase_S1_PA"/>
</dbReference>
<dbReference type="InterPro" id="IPR043504">
    <property type="entry name" value="Peptidase_S1_PA_chymotrypsin"/>
</dbReference>
<dbReference type="InterPro" id="IPR001314">
    <property type="entry name" value="Peptidase_S1A"/>
</dbReference>
<dbReference type="InterPro" id="IPR001254">
    <property type="entry name" value="Trypsin_dom"/>
</dbReference>
<dbReference type="InterPro" id="IPR018114">
    <property type="entry name" value="TRYPSIN_HIS"/>
</dbReference>
<dbReference type="InterPro" id="IPR033116">
    <property type="entry name" value="TRYPSIN_SER"/>
</dbReference>
<dbReference type="PANTHER" id="PTHR24278">
    <property type="entry name" value="COAGULATION FACTOR"/>
    <property type="match status" value="1"/>
</dbReference>
<dbReference type="PANTHER" id="PTHR24278:SF0">
    <property type="entry name" value="VITAMIN K-DEPENDENT PROTEIN C"/>
    <property type="match status" value="1"/>
</dbReference>
<dbReference type="Pfam" id="PF14670">
    <property type="entry name" value="FXa_inhibition"/>
    <property type="match status" value="1"/>
</dbReference>
<dbReference type="Pfam" id="PF00594">
    <property type="entry name" value="Gla"/>
    <property type="match status" value="1"/>
</dbReference>
<dbReference type="Pfam" id="PF00089">
    <property type="entry name" value="Trypsin"/>
    <property type="match status" value="1"/>
</dbReference>
<dbReference type="PIRSF" id="PIRSF001143">
    <property type="entry name" value="Factor_X"/>
    <property type="match status" value="1"/>
</dbReference>
<dbReference type="PRINTS" id="PR00722">
    <property type="entry name" value="CHYMOTRYPSIN"/>
</dbReference>
<dbReference type="PRINTS" id="PR00001">
    <property type="entry name" value="GLABLOOD"/>
</dbReference>
<dbReference type="SMART" id="SM00181">
    <property type="entry name" value="EGF"/>
    <property type="match status" value="2"/>
</dbReference>
<dbReference type="SMART" id="SM00179">
    <property type="entry name" value="EGF_CA"/>
    <property type="match status" value="1"/>
</dbReference>
<dbReference type="SMART" id="SM00069">
    <property type="entry name" value="GLA"/>
    <property type="match status" value="1"/>
</dbReference>
<dbReference type="SMART" id="SM00020">
    <property type="entry name" value="Tryp_SPc"/>
    <property type="match status" value="1"/>
</dbReference>
<dbReference type="SUPFAM" id="SSF57196">
    <property type="entry name" value="EGF/Laminin"/>
    <property type="match status" value="2"/>
</dbReference>
<dbReference type="SUPFAM" id="SSF57630">
    <property type="entry name" value="GLA-domain"/>
    <property type="match status" value="1"/>
</dbReference>
<dbReference type="SUPFAM" id="SSF50494">
    <property type="entry name" value="Trypsin-like serine proteases"/>
    <property type="match status" value="1"/>
</dbReference>
<dbReference type="PROSITE" id="PS00010">
    <property type="entry name" value="ASX_HYDROXYL"/>
    <property type="match status" value="1"/>
</dbReference>
<dbReference type="PROSITE" id="PS00022">
    <property type="entry name" value="EGF_1"/>
    <property type="match status" value="1"/>
</dbReference>
<dbReference type="PROSITE" id="PS01186">
    <property type="entry name" value="EGF_2"/>
    <property type="match status" value="2"/>
</dbReference>
<dbReference type="PROSITE" id="PS50026">
    <property type="entry name" value="EGF_3"/>
    <property type="match status" value="1"/>
</dbReference>
<dbReference type="PROSITE" id="PS01187">
    <property type="entry name" value="EGF_CA"/>
    <property type="match status" value="1"/>
</dbReference>
<dbReference type="PROSITE" id="PS00011">
    <property type="entry name" value="GLA_1"/>
    <property type="match status" value="1"/>
</dbReference>
<dbReference type="PROSITE" id="PS50998">
    <property type="entry name" value="GLA_2"/>
    <property type="match status" value="1"/>
</dbReference>
<dbReference type="PROSITE" id="PS50240">
    <property type="entry name" value="TRYPSIN_DOM"/>
    <property type="match status" value="1"/>
</dbReference>
<dbReference type="PROSITE" id="PS00134">
    <property type="entry name" value="TRYPSIN_HIS"/>
    <property type="match status" value="1"/>
</dbReference>
<dbReference type="PROSITE" id="PS00135">
    <property type="entry name" value="TRYPSIN_SER"/>
    <property type="match status" value="1"/>
</dbReference>
<comment type="function">
    <text evidence="3">Protein C is a vitamin K-dependent serine protease that regulates blood coagulation by inactivating factors Va and VIIIa in the presence of calcium ions and phospholipids. Exerts a protective effect on the endothelial cell barrier function.</text>
</comment>
<comment type="catalytic activity">
    <reaction>
        <text>Degradation of blood coagulation factors Va and VIIIa.</text>
        <dbReference type="EC" id="3.4.21.69"/>
    </reaction>
</comment>
<comment type="subunit">
    <text>Synthesized as a single chain precursor, which is cleaved into a light chain and a heavy chain held together by a disulfide bond. The enzyme is then activated by thrombin, which cleaves a tetradecapeptide from the amino end of the heavy chain; this reaction, which occurs at the surface of endothelial cells, is strongly promoted by thrombomodulin.</text>
</comment>
<comment type="subcellular location">
    <subcellularLocation>
        <location evidence="3">Secreted</location>
    </subcellularLocation>
    <subcellularLocation>
        <location evidence="3">Golgi apparatus</location>
    </subcellularLocation>
    <subcellularLocation>
        <location evidence="3">Endoplasmic reticulum</location>
    </subcellularLocation>
</comment>
<comment type="tissue specificity">
    <text>Plasma; synthesized in the liver.</text>
</comment>
<comment type="PTM">
    <text>The vitamin K-dependent, enzymatic carboxylation of some Glu residues allows the modified protein to bind calcium.</text>
</comment>
<comment type="PTM">
    <text evidence="1">The iron and 2-oxoglutarate dependent 3-hydroxylation of aspartate and asparagine is (R) stereospecific within EGF domains.</text>
</comment>
<comment type="miscellaneous">
    <text>Calcium also binds, with stronger affinity to another site, beyond the GLA domain. This GLA-independent binding site is necessary for the recognition of the thrombin-thrombomodulin complex.</text>
</comment>
<comment type="similarity">
    <text evidence="6">Belongs to the peptidase S1 family.</text>
</comment>
<sequence>IPDDVGYRNQKTASKEGVCVVSKCQDGPNTLPRAKRANSFLEELRPSSLERECVEEVCDLEEAKEIFQSVDDTLAFWYKYVDGDQCAALPSEHPCSSQCCGHGTCADSIGGFSCQCHGGWEGSFCQYEVRFSNCSVDNGGCAHYCLEEEAGRSCSCAPGYELADDHLQCEPAVRFPCGRLGWKRIEKKRGNVKRDLEQVDEMDEVDPRLIDGKLTRRGDSPWQVILLDSKKKLACGAVLIHVSWVLTAAHCMEEPKKLFVRLGEYDLRRKERWELDLNIQEVLIHPNYSRSTTDNDIALLRLAQPATLSQTIVPICLPDNGLAERELMQAGQETVVTGWGYHSSREKEAKRNRTFILNFITVPVAPQNECEQVMSNIISENMLCAGILGDRRDACDGDSGGPMVASFRGTWFLVGLVSWGEGCGDLNNYGVYTKVSRYLDWIHSHIEEKEAAPESPAP</sequence>
<reference key="1">
    <citation type="submission" date="1996-02" db="EMBL/GenBank/DDBJ databases">
        <authorList>
            <person name="Shen L."/>
            <person name="He X."/>
            <person name="Dahlback B."/>
        </authorList>
    </citation>
    <scope>NUCLEOTIDE SEQUENCE [MRNA]</scope>
    <source>
        <tissue>Liver</tissue>
    </source>
</reference>